<feature type="signal peptide" evidence="2">
    <location>
        <begin position="1"/>
        <end position="21"/>
    </location>
</feature>
<feature type="chain" id="PRO_0000319617" description="Angiopoietin-like protein 8">
    <location>
        <begin position="22"/>
        <end position="198"/>
    </location>
</feature>
<feature type="sequence variant" id="VAR_039046" description="Lover plasma LDL-cholesterol and HDL-cholesterol levels; dbSNP:rs2278426." evidence="5">
    <original>R</original>
    <variation>W</variation>
    <location>
        <position position="59"/>
    </location>
</feature>
<feature type="sequence variant" id="VAR_039047" description="In dbSNP:rs34056604.">
    <original>R</original>
    <variation>Q</variation>
    <location>
        <position position="147"/>
    </location>
</feature>
<proteinExistence type="evidence at protein level"/>
<comment type="function">
    <text evidence="1 3 4 5">Hormone that acts as a blood lipid regulator by regulating serum triglyceride levels (PubMed:22569073, PubMed:22809513, PubMed:23150577). May be involved in the metabolic transition between fasting and refeeding: required to direct fatty acids to adipose tissue for storage in the fed state (By similarity).</text>
</comment>
<comment type="subunit">
    <text evidence="5">Interacts with ANGPTL3.</text>
</comment>
<comment type="interaction">
    <interactant intactId="EBI-3943039">
        <id>Q6UXH0</id>
    </interactant>
    <interactant intactId="EBI-947779">
        <id>Q96PM5</id>
        <label>RCHY1</label>
    </interactant>
    <organismsDiffer>false</organismsDiffer>
    <experiments>2</experiments>
</comment>
<comment type="subcellular location">
    <subcellularLocation>
        <location evidence="5">Secreted</location>
    </subcellularLocation>
</comment>
<comment type="tissue specificity">
    <text evidence="3 4">Predominantly expressed in liver. Also expressed in adipose tissues.</text>
</comment>
<comment type="developmental stage">
    <text evidence="3">Transcripts are up-regulated by 100 fold during adipogenesis.</text>
</comment>
<comment type="induction">
    <text evidence="3 5">In response to food intake. Stimulated by insulin.</text>
</comment>
<comment type="PTM">
    <text evidence="10">Proteolytically cleaved at the N-terminus.</text>
</comment>
<comment type="disease" evidence="14">
    <disease id="DI-01826">
        <name>Type 1 diabetes mellitus</name>
        <acronym>T1D</acronym>
        <description>A multifactorial disorder of glucose homeostasis that is characterized by susceptibility to ketoacidosis in the absence of insulin therapy. Clinical features are polydipsia, polyphagia and polyuria which result from hyperglycemia-induced osmotic diuresis and secondary thirst. These derangements result in long-term complications that affect the eyes, kidneys, nerves, and blood vessels.</description>
        <dbReference type="MIM" id="222100"/>
    </disease>
    <text evidence="14">The gene represented in this entry may be involved in disease pathogenesis. Increased protein levels are observed in the serum of patients. This result should however be reinvestigated in light of recent advances that suggest that this protein is not promoting pancreatic beta cell proliferation.</text>
</comment>
<comment type="disease" evidence="15 16 17 20">
    <disease id="DI-02060">
        <name>Type 2 diabetes mellitus</name>
        <acronym>T2D</acronym>
        <description>A multifactorial disorder of glucose homeostasis caused by a lack of sensitivity to insulin. Affected individuals usually have an obese body habitus and manifestations of a metabolic syndrome characterized by diabetes, insulin resistance, hypertension and hypertriglyceridemia. The disease results in long-term complications that affect the eyes, kidneys, nerves, and blood vessels.</description>
        <dbReference type="MIM" id="125853"/>
    </disease>
    <text evidence="15 16 17 18 19 20">The gene represented in this entry may be involved in disease pathogenesis. Increased protein levels are observed in the serum of patients and are associated with insulin resistance (PubMed:24852694, PubMed:24963292, PubMed:25024395, PubMed:25303484). According to another report, protein levels are decreased in the serum of patients (PubMed:25050901). Discrepancies between increased and decreased levels of proteins levels in T2D patients may be explained by the use of different kits developed on the market that either use antibodies recognizing the N-terminal or the C-terminal part of the protein (PubMed:25099942). These results should however be reinvestigated in light of recent advances that suggest that this protein is not promoting pancreatic beta cell proliferation.</text>
</comment>
<comment type="similarity">
    <text evidence="12">Belongs to the ANGPTL8 family.</text>
</comment>
<comment type="caution">
    <text evidence="6 13 21">Initially reported to specifically promote pancreatic beta cell proliferation without insulin resistance and to promote beta cell mass expansion, thereby improving glucose tolerance (PubMed:23623304). However, this result could not be confirmed by further studies and the original paper was later retracted (PubMed:28038792). The lack of a role in beta cell proliferation was also confirmed in another study (PubMed:25417115).</text>
</comment>
<comment type="sequence caution" evidence="12">
    <conflict type="erroneous initiation">
        <sequence resource="EMBL-CDS" id="AAF76204"/>
    </conflict>
    <text>Extended N-terminus.</text>
</comment>
<comment type="sequence caution" evidence="12">
    <conflict type="erroneous gene model prediction">
        <sequence resource="EMBL-CDS" id="EAW84186"/>
    </conflict>
</comment>
<organism>
    <name type="scientific">Homo sapiens</name>
    <name type="common">Human</name>
    <dbReference type="NCBI Taxonomy" id="9606"/>
    <lineage>
        <taxon>Eukaryota</taxon>
        <taxon>Metazoa</taxon>
        <taxon>Chordata</taxon>
        <taxon>Craniata</taxon>
        <taxon>Vertebrata</taxon>
        <taxon>Euteleostomi</taxon>
        <taxon>Mammalia</taxon>
        <taxon>Eutheria</taxon>
        <taxon>Euarchontoglires</taxon>
        <taxon>Primates</taxon>
        <taxon>Haplorrhini</taxon>
        <taxon>Catarrhini</taxon>
        <taxon>Hominidae</taxon>
        <taxon>Homo</taxon>
    </lineage>
</organism>
<gene>
    <name evidence="22" type="primary">ANGPTL8</name>
    <name type="synonym">C19orf80</name>
    <name evidence="8" type="synonym">RIFL</name>
    <name evidence="7" type="ORF">UNQ599/PRO1185</name>
</gene>
<name>ANGL8_HUMAN</name>
<keyword id="KW-0219">Diabetes mellitus</keyword>
<keyword id="KW-0372">Hormone</keyword>
<keyword id="KW-0443">Lipid metabolism</keyword>
<keyword id="KW-1267">Proteomics identification</keyword>
<keyword id="KW-1185">Reference proteome</keyword>
<keyword id="KW-0964">Secreted</keyword>
<keyword id="KW-0732">Signal</keyword>
<evidence type="ECO:0000250" key="1">
    <source>
        <dbReference type="UniProtKB" id="Q8R1L8"/>
    </source>
</evidence>
<evidence type="ECO:0000255" key="2"/>
<evidence type="ECO:0000269" key="3">
    <source>
    </source>
</evidence>
<evidence type="ECO:0000269" key="4">
    <source>
    </source>
</evidence>
<evidence type="ECO:0000269" key="5">
    <source>
    </source>
</evidence>
<evidence type="ECO:0000269" key="6">
    <source>
    </source>
</evidence>
<evidence type="ECO:0000303" key="7">
    <source>
    </source>
</evidence>
<evidence type="ECO:0000303" key="8">
    <source>
    </source>
</evidence>
<evidence type="ECO:0000303" key="9">
    <source>
    </source>
</evidence>
<evidence type="ECO:0000303" key="10">
    <source>
    </source>
</evidence>
<evidence type="ECO:0000303" key="11">
    <source>
    </source>
</evidence>
<evidence type="ECO:0000305" key="12"/>
<evidence type="ECO:0000305" key="13">
    <source>
    </source>
</evidence>
<evidence type="ECO:0000305" key="14">
    <source>
    </source>
</evidence>
<evidence type="ECO:0000305" key="15">
    <source>
    </source>
</evidence>
<evidence type="ECO:0000305" key="16">
    <source>
    </source>
</evidence>
<evidence type="ECO:0000305" key="17">
    <source>
    </source>
</evidence>
<evidence type="ECO:0000305" key="18">
    <source>
    </source>
</evidence>
<evidence type="ECO:0000305" key="19">
    <source>
    </source>
</evidence>
<evidence type="ECO:0000305" key="20">
    <source>
    </source>
</evidence>
<evidence type="ECO:0000305" key="21">
    <source>
    </source>
</evidence>
<evidence type="ECO:0000312" key="22">
    <source>
        <dbReference type="HGNC" id="HGNC:24933"/>
    </source>
</evidence>
<reference key="1">
    <citation type="journal article" date="2004" name="Int. J. Cancer">
        <title>Identification of genes differentially expressed in human hepatocellular carcinoma by a modified suppression subtractive hybridization method.</title>
        <authorList>
            <person name="Dong X.Y."/>
            <person name="Pang X.W."/>
            <person name="Yu S.T."/>
            <person name="Su Y.R."/>
            <person name="Wang H.C."/>
            <person name="Yin Y.H."/>
            <person name="Wang Y.D."/>
            <person name="Chen W.F."/>
        </authorList>
    </citation>
    <scope>NUCLEOTIDE SEQUENCE [MRNA]</scope>
</reference>
<reference key="2">
    <citation type="journal article" date="2003" name="Genome Res.">
        <title>The secreted protein discovery initiative (SPDI), a large-scale effort to identify novel human secreted and transmembrane proteins: a bioinformatics assessment.</title>
        <authorList>
            <person name="Clark H.F."/>
            <person name="Gurney A.L."/>
            <person name="Abaya E."/>
            <person name="Baker K."/>
            <person name="Baldwin D.T."/>
            <person name="Brush J."/>
            <person name="Chen J."/>
            <person name="Chow B."/>
            <person name="Chui C."/>
            <person name="Crowley C."/>
            <person name="Currell B."/>
            <person name="Deuel B."/>
            <person name="Dowd P."/>
            <person name="Eaton D."/>
            <person name="Foster J.S."/>
            <person name="Grimaldi C."/>
            <person name="Gu Q."/>
            <person name="Hass P.E."/>
            <person name="Heldens S."/>
            <person name="Huang A."/>
            <person name="Kim H.S."/>
            <person name="Klimowski L."/>
            <person name="Jin Y."/>
            <person name="Johnson S."/>
            <person name="Lee J."/>
            <person name="Lewis L."/>
            <person name="Liao D."/>
            <person name="Mark M.R."/>
            <person name="Robbie E."/>
            <person name="Sanchez C."/>
            <person name="Schoenfeld J."/>
            <person name="Seshagiri S."/>
            <person name="Simmons L."/>
            <person name="Singh J."/>
            <person name="Smith V."/>
            <person name="Stinson J."/>
            <person name="Vagts A."/>
            <person name="Vandlen R.L."/>
            <person name="Watanabe C."/>
            <person name="Wieand D."/>
            <person name="Woods K."/>
            <person name="Xie M.-H."/>
            <person name="Yansura D.G."/>
            <person name="Yi S."/>
            <person name="Yu G."/>
            <person name="Yuan J."/>
            <person name="Zhang M."/>
            <person name="Zhang Z."/>
            <person name="Goddard A.D."/>
            <person name="Wood W.I."/>
            <person name="Godowski P.J."/>
            <person name="Gray A.M."/>
        </authorList>
    </citation>
    <scope>NUCLEOTIDE SEQUENCE [LARGE SCALE MRNA]</scope>
</reference>
<reference key="3">
    <citation type="journal article" date="2004" name="Nature">
        <title>The DNA sequence and biology of human chromosome 19.</title>
        <authorList>
            <person name="Grimwood J."/>
            <person name="Gordon L.A."/>
            <person name="Olsen A.S."/>
            <person name="Terry A."/>
            <person name="Schmutz J."/>
            <person name="Lamerdin J.E."/>
            <person name="Hellsten U."/>
            <person name="Goodstein D."/>
            <person name="Couronne O."/>
            <person name="Tran-Gyamfi M."/>
            <person name="Aerts A."/>
            <person name="Altherr M."/>
            <person name="Ashworth L."/>
            <person name="Bajorek E."/>
            <person name="Black S."/>
            <person name="Branscomb E."/>
            <person name="Caenepeel S."/>
            <person name="Carrano A.V."/>
            <person name="Caoile C."/>
            <person name="Chan Y.M."/>
            <person name="Christensen M."/>
            <person name="Cleland C.A."/>
            <person name="Copeland A."/>
            <person name="Dalin E."/>
            <person name="Dehal P."/>
            <person name="Denys M."/>
            <person name="Detter J.C."/>
            <person name="Escobar J."/>
            <person name="Flowers D."/>
            <person name="Fotopulos D."/>
            <person name="Garcia C."/>
            <person name="Georgescu A.M."/>
            <person name="Glavina T."/>
            <person name="Gomez M."/>
            <person name="Gonzales E."/>
            <person name="Groza M."/>
            <person name="Hammon N."/>
            <person name="Hawkins T."/>
            <person name="Haydu L."/>
            <person name="Ho I."/>
            <person name="Huang W."/>
            <person name="Israni S."/>
            <person name="Jett J."/>
            <person name="Kadner K."/>
            <person name="Kimball H."/>
            <person name="Kobayashi A."/>
            <person name="Larionov V."/>
            <person name="Leem S.-H."/>
            <person name="Lopez F."/>
            <person name="Lou Y."/>
            <person name="Lowry S."/>
            <person name="Malfatti S."/>
            <person name="Martinez D."/>
            <person name="McCready P.M."/>
            <person name="Medina C."/>
            <person name="Morgan J."/>
            <person name="Nelson K."/>
            <person name="Nolan M."/>
            <person name="Ovcharenko I."/>
            <person name="Pitluck S."/>
            <person name="Pollard M."/>
            <person name="Popkie A.P."/>
            <person name="Predki P."/>
            <person name="Quan G."/>
            <person name="Ramirez L."/>
            <person name="Rash S."/>
            <person name="Retterer J."/>
            <person name="Rodriguez A."/>
            <person name="Rogers S."/>
            <person name="Salamov A."/>
            <person name="Salazar A."/>
            <person name="She X."/>
            <person name="Smith D."/>
            <person name="Slezak T."/>
            <person name="Solovyev V."/>
            <person name="Thayer N."/>
            <person name="Tice H."/>
            <person name="Tsai M."/>
            <person name="Ustaszewska A."/>
            <person name="Vo N."/>
            <person name="Wagner M."/>
            <person name="Wheeler J."/>
            <person name="Wu K."/>
            <person name="Xie G."/>
            <person name="Yang J."/>
            <person name="Dubchak I."/>
            <person name="Furey T.S."/>
            <person name="DeJong P."/>
            <person name="Dickson M."/>
            <person name="Gordon D."/>
            <person name="Eichler E.E."/>
            <person name="Pennacchio L.A."/>
            <person name="Richardson P."/>
            <person name="Stubbs L."/>
            <person name="Rokhsar D.S."/>
            <person name="Myers R.M."/>
            <person name="Rubin E.M."/>
            <person name="Lucas S.M."/>
        </authorList>
    </citation>
    <scope>NUCLEOTIDE SEQUENCE [LARGE SCALE GENOMIC DNA]</scope>
</reference>
<reference key="4">
    <citation type="submission" date="2005-07" db="EMBL/GenBank/DDBJ databases">
        <authorList>
            <person name="Mural R.J."/>
            <person name="Istrail S."/>
            <person name="Sutton G.G."/>
            <person name="Florea L."/>
            <person name="Halpern A.L."/>
            <person name="Mobarry C.M."/>
            <person name="Lippert R."/>
            <person name="Walenz B."/>
            <person name="Shatkay H."/>
            <person name="Dew I."/>
            <person name="Miller J.R."/>
            <person name="Flanigan M.J."/>
            <person name="Edwards N.J."/>
            <person name="Bolanos R."/>
            <person name="Fasulo D."/>
            <person name="Halldorsson B.V."/>
            <person name="Hannenhalli S."/>
            <person name="Turner R."/>
            <person name="Yooseph S."/>
            <person name="Lu F."/>
            <person name="Nusskern D.R."/>
            <person name="Shue B.C."/>
            <person name="Zheng X.H."/>
            <person name="Zhong F."/>
            <person name="Delcher A.L."/>
            <person name="Huson D.H."/>
            <person name="Kravitz S.A."/>
            <person name="Mouchard L."/>
            <person name="Reinert K."/>
            <person name="Remington K.A."/>
            <person name="Clark A.G."/>
            <person name="Waterman M.S."/>
            <person name="Eichler E.E."/>
            <person name="Adams M.D."/>
            <person name="Hunkapiller M.W."/>
            <person name="Myers E.W."/>
            <person name="Venter J.C."/>
        </authorList>
    </citation>
    <scope>NUCLEOTIDE SEQUENCE [LARGE SCALE GENOMIC DNA]</scope>
</reference>
<reference key="5">
    <citation type="journal article" date="2012" name="Am. J. Physiol.">
        <title>Identification of RIFL, a novel adipocyte-enriched insulin target gene with a role in lipid metabolism.</title>
        <authorList>
            <person name="Ren G."/>
            <person name="Kim J.Y."/>
            <person name="Smas C.M."/>
        </authorList>
    </citation>
    <scope>FUNCTION</scope>
    <scope>TISSUE SPECIFICITY</scope>
    <scope>INDUCTION</scope>
    <scope>DEVELOPMENTAL STAGE</scope>
</reference>
<reference key="6">
    <citation type="journal article" date="2012" name="Biochem. Biophys. Res. Commun.">
        <title>Lipasin, a novel nutritionally-regulated liver-enriched factor that regulates serum triglyceride levels.</title>
        <authorList>
            <person name="Zhang R."/>
        </authorList>
    </citation>
    <scope>TISSUE SPECIFICITY</scope>
</reference>
<reference key="7">
    <citation type="journal article" date="2012" name="Proc. Natl. Acad. Sci. U.S.A.">
        <title>Atypical angiopoietin-like protein that regulates ANGPTL3.</title>
        <authorList>
            <person name="Quagliarini F."/>
            <person name="Wang Y."/>
            <person name="Kozlitina J."/>
            <person name="Grishin N.V."/>
            <person name="Hyde R."/>
            <person name="Boerwinkle E."/>
            <person name="Valenzuela D.M."/>
            <person name="Murphy A.J."/>
            <person name="Cohen J.C."/>
            <person name="Hobbs H.H."/>
        </authorList>
    </citation>
    <scope>SUBCELLULAR LOCATION</scope>
    <scope>TISSUE SPECIFICITY</scope>
    <scope>INDUCTION</scope>
    <scope>INTERACTION WITH ANGPTL3</scope>
    <scope>VARIANT TRP-59</scope>
    <scope>CHARACTERIZATION OF VARIANT TRP-59</scope>
</reference>
<reference key="8">
    <citation type="journal article" date="2013" name="Cell">
        <title>Betatrophin: a hormone that controls pancreatic beta cell proliferation.</title>
        <authorList>
            <person name="Yi P."/>
            <person name="Park J.S."/>
            <person name="Melton D.A."/>
        </authorList>
    </citation>
    <scope>RETRACTED PAPER</scope>
</reference>
<reference key="9">
    <citation type="journal article" date="2017" name="Cell">
        <authorList>
            <person name="Yi P."/>
            <person name="Park J.S."/>
            <person name="Melton D.A."/>
        </authorList>
    </citation>
    <scope>RETRACTION NOTICE OF PUBMED:23623304</scope>
</reference>
<reference key="10">
    <citation type="journal article" date="2014" name="Cell">
        <title>ANGPTL8/betatrophin does not control pancreatic beta cell expansion.</title>
        <authorList>
            <person name="Gusarova V."/>
            <person name="Alexa C.A."/>
            <person name="Na A."/>
            <person name="Stevis P.E."/>
            <person name="Xin Y."/>
            <person name="Bonner-Weir S."/>
            <person name="Cohen J.C."/>
            <person name="Hobbs H.H."/>
            <person name="Murphy A.J."/>
            <person name="Yancopoulos G.D."/>
            <person name="Gromada J."/>
        </authorList>
    </citation>
    <scope>LACK OF ROLE IN PANCREATIC BETA CELL PROLIFERATION</scope>
</reference>
<reference key="11">
    <citation type="journal article" date="2014" name="Diabetes Care">
        <title>Increased circulating levels of betatrophin in newly diagnosed type 2 diabetic patients.</title>
        <authorList>
            <person name="Hu H."/>
            <person name="Sun W."/>
            <person name="Yu S."/>
            <person name="Hong X."/>
            <person name="Qian W."/>
            <person name="Tang B."/>
            <person name="Wang D."/>
            <person name="Yang L."/>
            <person name="Wang J."/>
            <person name="Mao C."/>
            <person name="Zhou L."/>
            <person name="Yuan G."/>
        </authorList>
    </citation>
    <scope>POSSIBLE INVOLVEMENT IN T2D</scope>
</reference>
<reference key="12">
    <citation type="journal article" date="2014" name="Diabetologia">
        <title>Increased circulating levels of betatrophin in individuals with long-standing type 1 diabetes.</title>
        <authorList>
            <person name="Espes D."/>
            <person name="Lau J."/>
            <person name="Carlsson P.O."/>
        </authorList>
    </citation>
    <scope>POSSIBLE INVOLVEMENT IN T1D</scope>
</reference>
<reference key="13">
    <citation type="journal article" date="2014" name="Diabetologia">
        <title>An explanation for recent discrepancies in levels of human circulating betatrophin.</title>
        <authorList>
            <person name="Fu Z."/>
            <person name="Abou-Samra A.B."/>
            <person name="Zhang R."/>
        </authorList>
    </citation>
    <scope>PROTEOLYTIC PROCESSING</scope>
</reference>
<reference key="14">
    <citation type="journal article" date="2014" name="Int. J. Endocrinol.">
        <title>Increased circulating betatrophin concentrations in patients with type 2 diabetes.</title>
        <authorList>
            <person name="Espes D."/>
            <person name="Martinell M."/>
            <person name="Carlsson P.O."/>
        </authorList>
    </citation>
    <scope>POSSIBLE INVOLVEMENT IN T2D</scope>
</reference>
<reference key="15">
    <citation type="journal article" date="2014" name="J. Clin. Endocrinol. Metab.">
        <title>Circulating betatrophin concentrations are decreased in human obesity and type 2 diabetes.</title>
        <authorList>
            <person name="Gomez-Ambrosi J."/>
            <person name="Pascual E."/>
            <person name="Catalan V."/>
            <person name="Rodriguez A."/>
            <person name="Ramirez B."/>
            <person name="Silva C."/>
            <person name="Gil M.J."/>
            <person name="Salvador J."/>
            <person name="Fruehbeck G."/>
        </authorList>
    </citation>
    <scope>POSSIBLE INVOLVEMENT IN T2D</scope>
</reference>
<reference key="16">
    <citation type="journal article" date="2015" name="J. Clin. Endocrinol. Metab.">
        <title>Circulating betatrophin levels are increased in patients with type 2 diabetes and associated with insulin resistance.</title>
        <authorList>
            <person name="Chen X."/>
            <person name="Lu P."/>
            <person name="He W."/>
            <person name="Zhang J."/>
            <person name="Liu L."/>
            <person name="Yang Y."/>
            <person name="Liu Z."/>
            <person name="Xie J."/>
            <person name="Shao S."/>
            <person name="Du T."/>
            <person name="Su X."/>
            <person name="Zhou X."/>
            <person name="Hu S."/>
            <person name="Yuan G."/>
            <person name="Zhang M."/>
            <person name="Zhang H."/>
            <person name="Liu L."/>
            <person name="Wang D."/>
            <person name="Yu X."/>
        </authorList>
    </citation>
    <scope>POSSIBLE INVOLVEMENT IN T2D</scope>
</reference>
<reference key="17">
    <citation type="journal article" date="2014" name="Sci. Rep.">
        <title>Elevated circulating lipasin/betatrophin in human type 2 diabetes and obesity.</title>
        <authorList>
            <person name="Fu Z."/>
            <person name="Berhane F."/>
            <person name="Fite A."/>
            <person name="Seyoum B."/>
            <person name="Abou-Samra A.B."/>
            <person name="Zhang R."/>
        </authorList>
    </citation>
    <scope>POSSIBLE INVOLVEMENT IN T2D</scope>
</reference>
<sequence length="198" mass="22105">MPVPALCLLWALAMVTRPASAAPMGGPELAQHEELTLLFHGTLQLGQALNGVYRTTEGRLTKARNSLGLYGRTIELLGQEVSRGRDAAQELRASLLETQMEEDILQLQAEATAEVLGEVAQAQKVLRDSVQRLEVQLRSAWLGPAYREFEVLKAHADKQSHILWALTGHVQRQRREMVAQQHRLRQIQERLHTAALPA</sequence>
<accession>Q6UXH0</accession>
<accession>Q9NQZ1</accession>
<dbReference type="EMBL" id="AF271350">
    <property type="protein sequence ID" value="AAF76204.2"/>
    <property type="status" value="ALT_INIT"/>
    <property type="molecule type" value="mRNA"/>
</dbReference>
<dbReference type="EMBL" id="AY358356">
    <property type="protein sequence ID" value="AAQ88722.1"/>
    <property type="molecule type" value="mRNA"/>
</dbReference>
<dbReference type="EMBL" id="AC011472">
    <property type="status" value="NOT_ANNOTATED_CDS"/>
    <property type="molecule type" value="Genomic_DNA"/>
</dbReference>
<dbReference type="EMBL" id="CH471106">
    <property type="protein sequence ID" value="EAW84186.1"/>
    <property type="status" value="ALT_SEQ"/>
    <property type="molecule type" value="Genomic_DNA"/>
</dbReference>
<dbReference type="CCDS" id="CCDS54220.1"/>
<dbReference type="RefSeq" id="NP_061157.3">
    <property type="nucleotide sequence ID" value="NM_018687.6"/>
</dbReference>
<dbReference type="SMR" id="Q6UXH0"/>
<dbReference type="BioGRID" id="120994">
    <property type="interactions" value="90"/>
</dbReference>
<dbReference type="FunCoup" id="Q6UXH0">
    <property type="interactions" value="146"/>
</dbReference>
<dbReference type="IntAct" id="Q6UXH0">
    <property type="interactions" value="6"/>
</dbReference>
<dbReference type="STRING" id="9606.ENSP00000479969"/>
<dbReference type="ChEMBL" id="CHEMBL4523352"/>
<dbReference type="iPTMnet" id="Q6UXH0"/>
<dbReference type="PhosphoSitePlus" id="Q6UXH0"/>
<dbReference type="BioMuta" id="ANGPTL8"/>
<dbReference type="DMDM" id="74738217"/>
<dbReference type="MassIVE" id="Q6UXH0"/>
<dbReference type="PaxDb" id="9606-ENSP00000479969"/>
<dbReference type="PeptideAtlas" id="Q6UXH0"/>
<dbReference type="ProteomicsDB" id="67615"/>
<dbReference type="Antibodypedia" id="25764">
    <property type="antibodies" value="273 antibodies from 26 providers"/>
</dbReference>
<dbReference type="DNASU" id="55908"/>
<dbReference type="Ensembl" id="ENST00000252453.12">
    <property type="protein sequence ID" value="ENSP00000252453.7"/>
    <property type="gene ID" value="ENSG00000130173.14"/>
</dbReference>
<dbReference type="GeneID" id="55908"/>
<dbReference type="KEGG" id="hsa:55908"/>
<dbReference type="MANE-Select" id="ENST00000252453.12">
    <property type="protein sequence ID" value="ENSP00000252453.7"/>
    <property type="RefSeq nucleotide sequence ID" value="NM_018687.7"/>
    <property type="RefSeq protein sequence ID" value="NP_061157.3"/>
</dbReference>
<dbReference type="UCSC" id="uc021upf.2">
    <property type="organism name" value="human"/>
</dbReference>
<dbReference type="AGR" id="HGNC:24933"/>
<dbReference type="CTD" id="55908"/>
<dbReference type="DisGeNET" id="55908"/>
<dbReference type="GeneCards" id="ANGPTL8"/>
<dbReference type="HGNC" id="HGNC:24933">
    <property type="gene designation" value="ANGPTL8"/>
</dbReference>
<dbReference type="HPA" id="ENSG00000130173">
    <property type="expression patterns" value="Tissue enriched (liver)"/>
</dbReference>
<dbReference type="MIM" id="125853">
    <property type="type" value="phenotype"/>
</dbReference>
<dbReference type="MIM" id="222100">
    <property type="type" value="phenotype"/>
</dbReference>
<dbReference type="MIM" id="616223">
    <property type="type" value="gene"/>
</dbReference>
<dbReference type="neXtProt" id="NX_Q6UXH0"/>
<dbReference type="OpenTargets" id="ENSG00000130173"/>
<dbReference type="VEuPathDB" id="HostDB:ENSG00000130173"/>
<dbReference type="eggNOG" id="ENOG502SF52">
    <property type="taxonomic scope" value="Eukaryota"/>
</dbReference>
<dbReference type="GeneTree" id="ENSGT00440000034383"/>
<dbReference type="HOGENOM" id="CLU_097765_0_0_1"/>
<dbReference type="InParanoid" id="Q6UXH0"/>
<dbReference type="OMA" id="SHIVWAL"/>
<dbReference type="OrthoDB" id="8951891at2759"/>
<dbReference type="PAN-GO" id="Q6UXH0">
    <property type="GO annotations" value="3 GO annotations based on evolutionary models"/>
</dbReference>
<dbReference type="PhylomeDB" id="Q6UXH0"/>
<dbReference type="TreeFam" id="TF337951"/>
<dbReference type="PathwayCommons" id="Q6UXH0"/>
<dbReference type="Reactome" id="R-HSA-8963889">
    <property type="pathway name" value="Assembly of active LPL and LIPC lipase complexes"/>
</dbReference>
<dbReference type="SignaLink" id="Q6UXH0"/>
<dbReference type="BioGRID-ORCS" id="55908">
    <property type="hits" value="21 hits in 1125 CRISPR screens"/>
</dbReference>
<dbReference type="GenomeRNAi" id="55908"/>
<dbReference type="Pharos" id="Q6UXH0">
    <property type="development level" value="Tbio"/>
</dbReference>
<dbReference type="PRO" id="PR:Q6UXH0"/>
<dbReference type="Proteomes" id="UP000005640">
    <property type="component" value="Chromosome 19"/>
</dbReference>
<dbReference type="RNAct" id="Q6UXH0">
    <property type="molecule type" value="protein"/>
</dbReference>
<dbReference type="Bgee" id="ENSG00000130173">
    <property type="expression patterns" value="Expressed in right lobe of liver and 89 other cell types or tissues"/>
</dbReference>
<dbReference type="ExpressionAtlas" id="Q6UXH0">
    <property type="expression patterns" value="baseline and differential"/>
</dbReference>
<dbReference type="GO" id="GO:0005576">
    <property type="term" value="C:extracellular region"/>
    <property type="evidence" value="ECO:0000314"/>
    <property type="project" value="UniProtKB"/>
</dbReference>
<dbReference type="GO" id="GO:0005179">
    <property type="term" value="F:hormone activity"/>
    <property type="evidence" value="ECO:0007669"/>
    <property type="project" value="UniProtKB-KW"/>
</dbReference>
<dbReference type="GO" id="GO:0048469">
    <property type="term" value="P:cell maturation"/>
    <property type="evidence" value="ECO:0007669"/>
    <property type="project" value="Ensembl"/>
</dbReference>
<dbReference type="GO" id="GO:0045444">
    <property type="term" value="P:fat cell differentiation"/>
    <property type="evidence" value="ECO:0007669"/>
    <property type="project" value="Ensembl"/>
</dbReference>
<dbReference type="GO" id="GO:0006629">
    <property type="term" value="P:lipid metabolic process"/>
    <property type="evidence" value="ECO:0000250"/>
    <property type="project" value="UniProtKB"/>
</dbReference>
<dbReference type="GO" id="GO:0010954">
    <property type="term" value="P:positive regulation of protein processing"/>
    <property type="evidence" value="ECO:0000314"/>
    <property type="project" value="MGI"/>
</dbReference>
<dbReference type="GO" id="GO:0019216">
    <property type="term" value="P:regulation of lipid metabolic process"/>
    <property type="evidence" value="ECO:0000314"/>
    <property type="project" value="UniProtKB"/>
</dbReference>
<dbReference type="GO" id="GO:0050746">
    <property type="term" value="P:regulation of lipoprotein metabolic process"/>
    <property type="evidence" value="ECO:0000315"/>
    <property type="project" value="MGI"/>
</dbReference>
<dbReference type="GO" id="GO:0070328">
    <property type="term" value="P:triglyceride homeostasis"/>
    <property type="evidence" value="ECO:0000314"/>
    <property type="project" value="UniProtKB"/>
</dbReference>
<dbReference type="InterPro" id="IPR026614">
    <property type="entry name" value="ANGPTL8"/>
</dbReference>
<dbReference type="PANTHER" id="PTHR21463">
    <property type="entry name" value="ANGIOPOIETIN-LIKE PROTEIN 8"/>
    <property type="match status" value="1"/>
</dbReference>
<dbReference type="PANTHER" id="PTHR21463:SF0">
    <property type="entry name" value="ANGIOPOIETIN-LIKE PROTEIN 8"/>
    <property type="match status" value="1"/>
</dbReference>
<protein>
    <recommendedName>
        <fullName evidence="22">Angiopoietin-like protein 8</fullName>
    </recommendedName>
    <alternativeName>
        <fullName evidence="11">Betatrophin</fullName>
    </alternativeName>
    <alternativeName>
        <fullName evidence="9">Lipasin</fullName>
    </alternativeName>
    <alternativeName>
        <fullName evidence="8">Refeeding-induced fat and liver protein</fullName>
    </alternativeName>
</protein>